<comment type="function">
    <text evidence="1">The UvrABC repair system catalyzes the recognition and processing of DNA lesions. A damage recognition complex composed of 2 UvrA and 2 UvrB subunits scans DNA for abnormalities. Upon binding of the UvrA(2)B(2) complex to a putative damaged site, the DNA wraps around one UvrB monomer. DNA wrap is dependent on ATP binding by UvrB and probably causes local melting of the DNA helix, facilitating insertion of UvrB beta-hairpin between the DNA strands. Then UvrB probes one DNA strand for the presence of a lesion. If a lesion is found the UvrA subunits dissociate and the UvrB-DNA preincision complex is formed. This complex is subsequently bound by UvrC and the second UvrB is released. If no lesion is found, the DNA wraps around the other UvrB subunit that will check the other stand for damage.</text>
</comment>
<comment type="subunit">
    <text evidence="1">Forms a heterotetramer with UvrA during the search for lesions. Interacts with UvrC in an incision complex.</text>
</comment>
<comment type="subcellular location">
    <subcellularLocation>
        <location evidence="1">Cytoplasm</location>
    </subcellularLocation>
</comment>
<comment type="domain">
    <text evidence="1">The beta-hairpin motif is involved in DNA binding.</text>
</comment>
<comment type="similarity">
    <text evidence="1">Belongs to the UvrB family.</text>
</comment>
<keyword id="KW-0067">ATP-binding</keyword>
<keyword id="KW-0963">Cytoplasm</keyword>
<keyword id="KW-0227">DNA damage</keyword>
<keyword id="KW-0228">DNA excision</keyword>
<keyword id="KW-0234">DNA repair</keyword>
<keyword id="KW-0267">Excision nuclease</keyword>
<keyword id="KW-0347">Helicase</keyword>
<keyword id="KW-0378">Hydrolase</keyword>
<keyword id="KW-0547">Nucleotide-binding</keyword>
<keyword id="KW-0742">SOS response</keyword>
<proteinExistence type="inferred from homology"/>
<feature type="chain" id="PRO_1000077887" description="UvrABC system protein B">
    <location>
        <begin position="1"/>
        <end position="673"/>
    </location>
</feature>
<feature type="domain" description="Helicase ATP-binding" evidence="1">
    <location>
        <begin position="26"/>
        <end position="183"/>
    </location>
</feature>
<feature type="domain" description="Helicase C-terminal" evidence="1">
    <location>
        <begin position="431"/>
        <end position="597"/>
    </location>
</feature>
<feature type="domain" description="UVR" evidence="1">
    <location>
        <begin position="633"/>
        <end position="668"/>
    </location>
</feature>
<feature type="region of interest" description="Disordered" evidence="2">
    <location>
        <begin position="608"/>
        <end position="627"/>
    </location>
</feature>
<feature type="short sequence motif" description="Beta-hairpin">
    <location>
        <begin position="92"/>
        <end position="115"/>
    </location>
</feature>
<feature type="binding site" evidence="1">
    <location>
        <begin position="39"/>
        <end position="46"/>
    </location>
    <ligand>
        <name>ATP</name>
        <dbReference type="ChEBI" id="CHEBI:30616"/>
    </ligand>
</feature>
<name>UVRB_ECOHS</name>
<reference key="1">
    <citation type="journal article" date="2008" name="J. Bacteriol.">
        <title>The pangenome structure of Escherichia coli: comparative genomic analysis of E. coli commensal and pathogenic isolates.</title>
        <authorList>
            <person name="Rasko D.A."/>
            <person name="Rosovitz M.J."/>
            <person name="Myers G.S.A."/>
            <person name="Mongodin E.F."/>
            <person name="Fricke W.F."/>
            <person name="Gajer P."/>
            <person name="Crabtree J."/>
            <person name="Sebaihia M."/>
            <person name="Thomson N.R."/>
            <person name="Chaudhuri R."/>
            <person name="Henderson I.R."/>
            <person name="Sperandio V."/>
            <person name="Ravel J."/>
        </authorList>
    </citation>
    <scope>NUCLEOTIDE SEQUENCE [LARGE SCALE GENOMIC DNA]</scope>
    <source>
        <strain>HS</strain>
    </source>
</reference>
<evidence type="ECO:0000255" key="1">
    <source>
        <dbReference type="HAMAP-Rule" id="MF_00204"/>
    </source>
</evidence>
<evidence type="ECO:0000256" key="2">
    <source>
        <dbReference type="SAM" id="MobiDB-lite"/>
    </source>
</evidence>
<accession>A7ZY35</accession>
<organism>
    <name type="scientific">Escherichia coli O9:H4 (strain HS)</name>
    <dbReference type="NCBI Taxonomy" id="331112"/>
    <lineage>
        <taxon>Bacteria</taxon>
        <taxon>Pseudomonadati</taxon>
        <taxon>Pseudomonadota</taxon>
        <taxon>Gammaproteobacteria</taxon>
        <taxon>Enterobacterales</taxon>
        <taxon>Enterobacteriaceae</taxon>
        <taxon>Escherichia</taxon>
    </lineage>
</organism>
<dbReference type="EMBL" id="CP000802">
    <property type="protein sequence ID" value="ABV05189.1"/>
    <property type="molecule type" value="Genomic_DNA"/>
</dbReference>
<dbReference type="RefSeq" id="WP_000042533.1">
    <property type="nucleotide sequence ID" value="NC_009800.1"/>
</dbReference>
<dbReference type="BMRB" id="A7ZY35"/>
<dbReference type="SMR" id="A7ZY35"/>
<dbReference type="GeneID" id="93776651"/>
<dbReference type="KEGG" id="ecx:EcHS_A0833"/>
<dbReference type="HOGENOM" id="CLU_009621_2_1_6"/>
<dbReference type="GO" id="GO:0005737">
    <property type="term" value="C:cytoplasm"/>
    <property type="evidence" value="ECO:0007669"/>
    <property type="project" value="UniProtKB-SubCell"/>
</dbReference>
<dbReference type="GO" id="GO:0009380">
    <property type="term" value="C:excinuclease repair complex"/>
    <property type="evidence" value="ECO:0007669"/>
    <property type="project" value="InterPro"/>
</dbReference>
<dbReference type="GO" id="GO:0005524">
    <property type="term" value="F:ATP binding"/>
    <property type="evidence" value="ECO:0007669"/>
    <property type="project" value="UniProtKB-UniRule"/>
</dbReference>
<dbReference type="GO" id="GO:0016887">
    <property type="term" value="F:ATP hydrolysis activity"/>
    <property type="evidence" value="ECO:0007669"/>
    <property type="project" value="InterPro"/>
</dbReference>
<dbReference type="GO" id="GO:0003677">
    <property type="term" value="F:DNA binding"/>
    <property type="evidence" value="ECO:0007669"/>
    <property type="project" value="UniProtKB-UniRule"/>
</dbReference>
<dbReference type="GO" id="GO:0009381">
    <property type="term" value="F:excinuclease ABC activity"/>
    <property type="evidence" value="ECO:0007669"/>
    <property type="project" value="UniProtKB-UniRule"/>
</dbReference>
<dbReference type="GO" id="GO:0004386">
    <property type="term" value="F:helicase activity"/>
    <property type="evidence" value="ECO:0007669"/>
    <property type="project" value="UniProtKB-KW"/>
</dbReference>
<dbReference type="GO" id="GO:0006289">
    <property type="term" value="P:nucleotide-excision repair"/>
    <property type="evidence" value="ECO:0007669"/>
    <property type="project" value="UniProtKB-UniRule"/>
</dbReference>
<dbReference type="GO" id="GO:0009432">
    <property type="term" value="P:SOS response"/>
    <property type="evidence" value="ECO:0007669"/>
    <property type="project" value="UniProtKB-UniRule"/>
</dbReference>
<dbReference type="CDD" id="cd17916">
    <property type="entry name" value="DEXHc_UvrB"/>
    <property type="match status" value="1"/>
</dbReference>
<dbReference type="CDD" id="cd18790">
    <property type="entry name" value="SF2_C_UvrB"/>
    <property type="match status" value="1"/>
</dbReference>
<dbReference type="FunFam" id="3.40.50.300:FF:000257">
    <property type="entry name" value="UvrABC system protein B"/>
    <property type="match status" value="1"/>
</dbReference>
<dbReference type="FunFam" id="3.40.50.300:FF:000401">
    <property type="entry name" value="UvrABC system protein B"/>
    <property type="match status" value="1"/>
</dbReference>
<dbReference type="FunFam" id="3.40.50.300:FF:000477">
    <property type="entry name" value="UvrABC system protein B"/>
    <property type="match status" value="1"/>
</dbReference>
<dbReference type="Gene3D" id="3.40.50.300">
    <property type="entry name" value="P-loop containing nucleotide triphosphate hydrolases"/>
    <property type="match status" value="3"/>
</dbReference>
<dbReference type="Gene3D" id="4.10.860.10">
    <property type="entry name" value="UVR domain"/>
    <property type="match status" value="1"/>
</dbReference>
<dbReference type="HAMAP" id="MF_00204">
    <property type="entry name" value="UvrB"/>
    <property type="match status" value="1"/>
</dbReference>
<dbReference type="InterPro" id="IPR006935">
    <property type="entry name" value="Helicase/UvrB_N"/>
</dbReference>
<dbReference type="InterPro" id="IPR014001">
    <property type="entry name" value="Helicase_ATP-bd"/>
</dbReference>
<dbReference type="InterPro" id="IPR001650">
    <property type="entry name" value="Helicase_C-like"/>
</dbReference>
<dbReference type="InterPro" id="IPR027417">
    <property type="entry name" value="P-loop_NTPase"/>
</dbReference>
<dbReference type="InterPro" id="IPR001943">
    <property type="entry name" value="UVR_dom"/>
</dbReference>
<dbReference type="InterPro" id="IPR036876">
    <property type="entry name" value="UVR_dom_sf"/>
</dbReference>
<dbReference type="InterPro" id="IPR004807">
    <property type="entry name" value="UvrB"/>
</dbReference>
<dbReference type="InterPro" id="IPR041471">
    <property type="entry name" value="UvrB_inter"/>
</dbReference>
<dbReference type="InterPro" id="IPR024759">
    <property type="entry name" value="UvrB_YAD/RRR_dom"/>
</dbReference>
<dbReference type="NCBIfam" id="NF003673">
    <property type="entry name" value="PRK05298.1"/>
    <property type="match status" value="1"/>
</dbReference>
<dbReference type="NCBIfam" id="TIGR00631">
    <property type="entry name" value="uvrb"/>
    <property type="match status" value="1"/>
</dbReference>
<dbReference type="PANTHER" id="PTHR24029">
    <property type="entry name" value="UVRABC SYSTEM PROTEIN B"/>
    <property type="match status" value="1"/>
</dbReference>
<dbReference type="PANTHER" id="PTHR24029:SF0">
    <property type="entry name" value="UVRABC SYSTEM PROTEIN B"/>
    <property type="match status" value="1"/>
</dbReference>
<dbReference type="Pfam" id="PF00271">
    <property type="entry name" value="Helicase_C"/>
    <property type="match status" value="1"/>
</dbReference>
<dbReference type="Pfam" id="PF04851">
    <property type="entry name" value="ResIII"/>
    <property type="match status" value="1"/>
</dbReference>
<dbReference type="Pfam" id="PF02151">
    <property type="entry name" value="UVR"/>
    <property type="match status" value="1"/>
</dbReference>
<dbReference type="Pfam" id="PF12344">
    <property type="entry name" value="UvrB"/>
    <property type="match status" value="1"/>
</dbReference>
<dbReference type="Pfam" id="PF17757">
    <property type="entry name" value="UvrB_inter"/>
    <property type="match status" value="1"/>
</dbReference>
<dbReference type="SMART" id="SM00487">
    <property type="entry name" value="DEXDc"/>
    <property type="match status" value="1"/>
</dbReference>
<dbReference type="SMART" id="SM00490">
    <property type="entry name" value="HELICc"/>
    <property type="match status" value="1"/>
</dbReference>
<dbReference type="SUPFAM" id="SSF46600">
    <property type="entry name" value="C-terminal UvrC-binding domain of UvrB"/>
    <property type="match status" value="1"/>
</dbReference>
<dbReference type="SUPFAM" id="SSF52540">
    <property type="entry name" value="P-loop containing nucleoside triphosphate hydrolases"/>
    <property type="match status" value="2"/>
</dbReference>
<dbReference type="PROSITE" id="PS51192">
    <property type="entry name" value="HELICASE_ATP_BIND_1"/>
    <property type="match status" value="1"/>
</dbReference>
<dbReference type="PROSITE" id="PS51194">
    <property type="entry name" value="HELICASE_CTER"/>
    <property type="match status" value="1"/>
</dbReference>
<dbReference type="PROSITE" id="PS50151">
    <property type="entry name" value="UVR"/>
    <property type="match status" value="1"/>
</dbReference>
<gene>
    <name evidence="1" type="primary">uvrB</name>
    <name type="ordered locus">EcHS_A0833</name>
</gene>
<protein>
    <recommendedName>
        <fullName evidence="1">UvrABC system protein B</fullName>
        <shortName evidence="1">Protein UvrB</shortName>
    </recommendedName>
    <alternativeName>
        <fullName evidence="1">Excinuclease ABC subunit B</fullName>
    </alternativeName>
</protein>
<sequence>MSKPFKLNSAFKPSGDQPEAIRRLEEGLEDGLAHQTLLGVTGSGKTFTIANVIADLQRPTMVLAPNKTLAAQLYGEMKEFFPENAVEYFVSYYDYYQPEAYVPSSDTFIEKDASVNEHIEQMRLSATKAMLERRDVVVVASVSAIYGLGDPDLYLKMMLHLTVGMIIDQRAILRRLAELQYARNDQAFQRGTFRVRGEVIDIFPAESDDIALRVELFDEEVERLSLFDPLTGQIVSTIPRFTIYPKTHYVTPRERIVQAMEEIKEELAARRKVLLENNKLLEEQRLTQRTQFDLEMMNELGYCSGIENYSRFLSGRGPGEPPPTLFDYLPADGLLVVDESHVTIPQIGGMYRGDRARKETLVEYGFRLPSALDNRPLKFEEFEALAPQTIYVSATPGNYELEKSGGDVVDQVVRPTGLLDPIIEVRPVATQVDDLLSEIRQRAAINERVLVTTLTKRMAEDLTEYLEEHGERVRYLHSDIDTVERMEIIRDLRLGEFDVLVGINLLREGLDMPEVSLVAILDADKEGFLRSERSLIQTIGRAARNVNGKAILYGDKITPSMAKAIGETERRREKQQKYNEEHGITPQGLNKKVVDILALGQNIAKTKAKGRGKSRPIVEPDNVPMDMSPKALQQKIHELEGLMMQHAQNLEFEEAAQIRDQLHQLRELFIAAS</sequence>